<comment type="function">
    <text>Involved in oxygen transport from the lung to the various peripheral tissues.</text>
</comment>
<comment type="subunit">
    <text>Heterotetramer of two alpha chains and two beta chains.</text>
</comment>
<comment type="tissue specificity">
    <text>Red blood cells.</text>
</comment>
<comment type="similarity">
    <text evidence="3">Belongs to the globin family.</text>
</comment>
<evidence type="ECO:0000250" key="1">
    <source>
        <dbReference type="UniProtKB" id="P02086"/>
    </source>
</evidence>
<evidence type="ECO:0000250" key="2">
    <source>
        <dbReference type="UniProtKB" id="P68871"/>
    </source>
</evidence>
<evidence type="ECO:0000255" key="3">
    <source>
        <dbReference type="PROSITE-ProRule" id="PRU00238"/>
    </source>
</evidence>
<protein>
    <recommendedName>
        <fullName>Hemoglobin subunit beta</fullName>
    </recommendedName>
    <alternativeName>
        <fullName>Beta-globin</fullName>
    </alternativeName>
    <alternativeName>
        <fullName>Hemoglobin beta chain</fullName>
    </alternativeName>
</protein>
<reference key="1">
    <citation type="journal article" date="1976" name="Biochim. Biophys. Acta">
        <title>Primary sequence of the beat-chain of Badger haemoglobin.</title>
        <authorList>
            <person name="Hombrados I."/>
            <person name="Ducastaing S."/>
            <person name="Iron A."/>
            <person name="Neuzil E."/>
            <person name="Debuire B."/>
            <person name="Han K.-K."/>
        </authorList>
    </citation>
    <scope>PROTEIN SEQUENCE</scope>
</reference>
<sequence length="146" mass="16010">VHLTAEEKSAVTSLWGKVNVDEVGGEALGRLLVVYPWTQRYFDSFGDLSTPDAVMGNPKVKAHGKKVLNSFSEGLKNLDNLKGTFAKLSELHCDKLHVDPENFKLLGNVLVCVLAHHFGKEFTPQVQAAYQKVVAGVANALAHKYH</sequence>
<accession>P02055</accession>
<name>HBB_MELME</name>
<feature type="chain" id="PRO_0000053014" description="Hemoglobin subunit beta">
    <location>
        <begin position="1"/>
        <end position="146"/>
    </location>
</feature>
<feature type="domain" description="Globin" evidence="3">
    <location>
        <begin position="2"/>
        <end position="146"/>
    </location>
</feature>
<feature type="binding site" description="distal binding residue">
    <location>
        <position position="63"/>
    </location>
    <ligand>
        <name>heme b</name>
        <dbReference type="ChEBI" id="CHEBI:60344"/>
    </ligand>
    <ligandPart>
        <name>Fe</name>
        <dbReference type="ChEBI" id="CHEBI:18248"/>
    </ligandPart>
</feature>
<feature type="binding site" description="proximal binding residue">
    <location>
        <position position="92"/>
    </location>
    <ligand>
        <name>heme b</name>
        <dbReference type="ChEBI" id="CHEBI:60344"/>
    </ligand>
    <ligandPart>
        <name>Fe</name>
        <dbReference type="ChEBI" id="CHEBI:18248"/>
    </ligandPart>
</feature>
<feature type="modified residue" description="N-acetylvaline" evidence="1">
    <location>
        <position position="1"/>
    </location>
</feature>
<feature type="modified residue" description="Phosphothreonine" evidence="2">
    <location>
        <position position="12"/>
    </location>
</feature>
<feature type="modified residue" description="Phosphoserine" evidence="2">
    <location>
        <position position="44"/>
    </location>
</feature>
<feature type="modified residue" description="N6-acetyllysine" evidence="2">
    <location>
        <position position="59"/>
    </location>
</feature>
<feature type="modified residue" description="N6-acetyllysine" evidence="2">
    <location>
        <position position="82"/>
    </location>
</feature>
<feature type="modified residue" description="S-nitrosocysteine" evidence="2">
    <location>
        <position position="93"/>
    </location>
</feature>
<feature type="modified residue" description="N6-acetyllysine" evidence="2">
    <location>
        <position position="144"/>
    </location>
</feature>
<dbReference type="PIR" id="A02372">
    <property type="entry name" value="HBBD"/>
</dbReference>
<dbReference type="SMR" id="P02055"/>
<dbReference type="GO" id="GO:0072562">
    <property type="term" value="C:blood microparticle"/>
    <property type="evidence" value="ECO:0007669"/>
    <property type="project" value="TreeGrafter"/>
</dbReference>
<dbReference type="GO" id="GO:0031838">
    <property type="term" value="C:haptoglobin-hemoglobin complex"/>
    <property type="evidence" value="ECO:0007669"/>
    <property type="project" value="TreeGrafter"/>
</dbReference>
<dbReference type="GO" id="GO:0005833">
    <property type="term" value="C:hemoglobin complex"/>
    <property type="evidence" value="ECO:0007669"/>
    <property type="project" value="InterPro"/>
</dbReference>
<dbReference type="GO" id="GO:0031720">
    <property type="term" value="F:haptoglobin binding"/>
    <property type="evidence" value="ECO:0007669"/>
    <property type="project" value="TreeGrafter"/>
</dbReference>
<dbReference type="GO" id="GO:0020037">
    <property type="term" value="F:heme binding"/>
    <property type="evidence" value="ECO:0007669"/>
    <property type="project" value="InterPro"/>
</dbReference>
<dbReference type="GO" id="GO:0031721">
    <property type="term" value="F:hemoglobin alpha binding"/>
    <property type="evidence" value="ECO:0007669"/>
    <property type="project" value="TreeGrafter"/>
</dbReference>
<dbReference type="GO" id="GO:0046872">
    <property type="term" value="F:metal ion binding"/>
    <property type="evidence" value="ECO:0007669"/>
    <property type="project" value="UniProtKB-KW"/>
</dbReference>
<dbReference type="GO" id="GO:0043177">
    <property type="term" value="F:organic acid binding"/>
    <property type="evidence" value="ECO:0007669"/>
    <property type="project" value="TreeGrafter"/>
</dbReference>
<dbReference type="GO" id="GO:0019825">
    <property type="term" value="F:oxygen binding"/>
    <property type="evidence" value="ECO:0007669"/>
    <property type="project" value="InterPro"/>
</dbReference>
<dbReference type="GO" id="GO:0005344">
    <property type="term" value="F:oxygen carrier activity"/>
    <property type="evidence" value="ECO:0007669"/>
    <property type="project" value="UniProtKB-KW"/>
</dbReference>
<dbReference type="GO" id="GO:0004601">
    <property type="term" value="F:peroxidase activity"/>
    <property type="evidence" value="ECO:0007669"/>
    <property type="project" value="TreeGrafter"/>
</dbReference>
<dbReference type="GO" id="GO:0042744">
    <property type="term" value="P:hydrogen peroxide catabolic process"/>
    <property type="evidence" value="ECO:0007669"/>
    <property type="project" value="TreeGrafter"/>
</dbReference>
<dbReference type="CDD" id="cd08925">
    <property type="entry name" value="Hb-beta-like"/>
    <property type="match status" value="1"/>
</dbReference>
<dbReference type="FunFam" id="1.10.490.10:FF:000001">
    <property type="entry name" value="Hemoglobin subunit beta"/>
    <property type="match status" value="1"/>
</dbReference>
<dbReference type="Gene3D" id="1.10.490.10">
    <property type="entry name" value="Globins"/>
    <property type="match status" value="1"/>
</dbReference>
<dbReference type="InterPro" id="IPR000971">
    <property type="entry name" value="Globin"/>
</dbReference>
<dbReference type="InterPro" id="IPR009050">
    <property type="entry name" value="Globin-like_sf"/>
</dbReference>
<dbReference type="InterPro" id="IPR012292">
    <property type="entry name" value="Globin/Proto"/>
</dbReference>
<dbReference type="InterPro" id="IPR002337">
    <property type="entry name" value="Hemoglobin_b"/>
</dbReference>
<dbReference type="InterPro" id="IPR050056">
    <property type="entry name" value="Hemoglobin_oxygen_transport"/>
</dbReference>
<dbReference type="PANTHER" id="PTHR11442">
    <property type="entry name" value="HEMOGLOBIN FAMILY MEMBER"/>
    <property type="match status" value="1"/>
</dbReference>
<dbReference type="PANTHER" id="PTHR11442:SF42">
    <property type="entry name" value="HEMOGLOBIN SUBUNIT BETA"/>
    <property type="match status" value="1"/>
</dbReference>
<dbReference type="Pfam" id="PF00042">
    <property type="entry name" value="Globin"/>
    <property type="match status" value="1"/>
</dbReference>
<dbReference type="PRINTS" id="PR00814">
    <property type="entry name" value="BETAHAEM"/>
</dbReference>
<dbReference type="SUPFAM" id="SSF46458">
    <property type="entry name" value="Globin-like"/>
    <property type="match status" value="1"/>
</dbReference>
<dbReference type="PROSITE" id="PS01033">
    <property type="entry name" value="GLOBIN"/>
    <property type="match status" value="1"/>
</dbReference>
<organism>
    <name type="scientific">Meles meles</name>
    <name type="common">Eurasian badger</name>
    <dbReference type="NCBI Taxonomy" id="9662"/>
    <lineage>
        <taxon>Eukaryota</taxon>
        <taxon>Metazoa</taxon>
        <taxon>Chordata</taxon>
        <taxon>Craniata</taxon>
        <taxon>Vertebrata</taxon>
        <taxon>Euteleostomi</taxon>
        <taxon>Mammalia</taxon>
        <taxon>Eutheria</taxon>
        <taxon>Laurasiatheria</taxon>
        <taxon>Carnivora</taxon>
        <taxon>Caniformia</taxon>
        <taxon>Musteloidea</taxon>
        <taxon>Mustelidae</taxon>
        <taxon>Melinae</taxon>
        <taxon>Meles</taxon>
    </lineage>
</organism>
<keyword id="KW-0007">Acetylation</keyword>
<keyword id="KW-0903">Direct protein sequencing</keyword>
<keyword id="KW-0349">Heme</keyword>
<keyword id="KW-0408">Iron</keyword>
<keyword id="KW-0479">Metal-binding</keyword>
<keyword id="KW-0561">Oxygen transport</keyword>
<keyword id="KW-0597">Phosphoprotein</keyword>
<keyword id="KW-0702">S-nitrosylation</keyword>
<keyword id="KW-0813">Transport</keyword>
<gene>
    <name type="primary">HBB</name>
</gene>
<proteinExistence type="evidence at protein level"/>